<gene>
    <name type="primary">Gp5</name>
</gene>
<evidence type="ECO:0000250" key="1"/>
<evidence type="ECO:0000255" key="2"/>
<sequence length="567" mass="63468">MLRSALLSAVLPLLRAQPFPCPKTCKCVVRDAAQCSGGSVAHIAELGLPTNLTHILLFRMDQGILRNHSFSGMTVLQRQMLSDSHISAIDPGTFNDLVKLKTLRLTRNKISRLPRAILDKMVLLEQLFLDHNALRDLDQNLFQQLRNLQELGLNQNQLSFLPANLFSSLRELKLLDLSRNNLTHLPKGLLGAQVKLEKLLLYSNQLTSVDSGLLSNLGALTELRLERNHLRSVAPGAFDRLGNLSSLTLSGNLLESLPPALFLHVSSVSRLTLFENPLEELPDVLFGEMAGLRELWLNGTHLSTLPAAAFRNLSGLQTLGLTRNPRLSALPRGVFQGLRELRVLGLHTNALAELRDDALRGLGHLRQVSLRHNRLRALPRTLFRNLSSLESVQLEHNQLETLPGDVFAALPQLTQVLLGHNPWLCDCGLWRFLQWLRHHPDILGRDEPPQCRGPEPRASLSFWELLQGDPWCPDPRSLPLDPPTENALEAPVPSWLPNSWQSQTWAQLVARGESPNNRLYWGLYILLLVAQAIIAAFIVFAMIKIGQLFRTLIREKLLLEAMGKSCN</sequence>
<protein>
    <recommendedName>
        <fullName>Platelet glycoprotein V</fullName>
        <shortName>GPV</shortName>
    </recommendedName>
    <alternativeName>
        <fullName>Glycoprotein 5</fullName>
    </alternativeName>
    <cdAntigenName>CD42d</cdAntigenName>
</protein>
<dbReference type="EMBL" id="Z69595">
    <property type="protein sequence ID" value="CAA93441.1"/>
    <property type="molecule type" value="Genomic_DNA"/>
</dbReference>
<dbReference type="CCDS" id="CCDS28100.1"/>
<dbReference type="SMR" id="O08742"/>
<dbReference type="ComplexPortal" id="CPX-115">
    <property type="entry name" value="Glycoprotein Ib-IX-V complex"/>
</dbReference>
<dbReference type="ComplexPortal" id="CPX-118">
    <property type="entry name" value="Glycoprotein Ib-IX-V-Filamin-A complex"/>
</dbReference>
<dbReference type="FunCoup" id="O08742">
    <property type="interactions" value="17"/>
</dbReference>
<dbReference type="STRING" id="10090.ENSMUSP00000051895"/>
<dbReference type="GlyCosmos" id="O08742">
    <property type="glycosylation" value="7 sites, No reported glycans"/>
</dbReference>
<dbReference type="GlyGen" id="O08742">
    <property type="glycosylation" value="7 sites, 3 N-linked glycans (3 sites)"/>
</dbReference>
<dbReference type="PhosphoSitePlus" id="O08742"/>
<dbReference type="CPTAC" id="non-CPTAC-3306"/>
<dbReference type="PaxDb" id="10090-ENSMUSP00000051895"/>
<dbReference type="PeptideAtlas" id="O08742"/>
<dbReference type="ProteomicsDB" id="271083"/>
<dbReference type="AGR" id="MGI:1096363"/>
<dbReference type="MGI" id="MGI:1096363">
    <property type="gene designation" value="Gp5"/>
</dbReference>
<dbReference type="eggNOG" id="KOG0619">
    <property type="taxonomic scope" value="Eukaryota"/>
</dbReference>
<dbReference type="InParanoid" id="O08742"/>
<dbReference type="PhylomeDB" id="O08742"/>
<dbReference type="Reactome" id="R-MMU-140837">
    <property type="pathway name" value="Intrinsic Pathway of Fibrin Clot Formation"/>
</dbReference>
<dbReference type="Reactome" id="R-MMU-430116">
    <property type="pathway name" value="GP1b-IX-V activation signalling"/>
</dbReference>
<dbReference type="Reactome" id="R-MMU-75892">
    <property type="pathway name" value="Platelet Adhesion to exposed collagen"/>
</dbReference>
<dbReference type="Reactome" id="R-MMU-76009">
    <property type="pathway name" value="Platelet Aggregation (Plug Formation)"/>
</dbReference>
<dbReference type="PRO" id="PR:O08742"/>
<dbReference type="Proteomes" id="UP000000589">
    <property type="component" value="Unplaced"/>
</dbReference>
<dbReference type="RNAct" id="O08742">
    <property type="molecule type" value="protein"/>
</dbReference>
<dbReference type="GO" id="GO:0009986">
    <property type="term" value="C:cell surface"/>
    <property type="evidence" value="ECO:0000266"/>
    <property type="project" value="MGI"/>
</dbReference>
<dbReference type="GO" id="GO:1990779">
    <property type="term" value="C:glycoprotein Ib-IX-V complex"/>
    <property type="evidence" value="ECO:0000266"/>
    <property type="project" value="ComplexPortal"/>
</dbReference>
<dbReference type="GO" id="GO:0005518">
    <property type="term" value="F:collagen binding"/>
    <property type="evidence" value="ECO:0000314"/>
    <property type="project" value="MGI"/>
</dbReference>
<dbReference type="GO" id="GO:0007596">
    <property type="term" value="P:blood coagulation"/>
    <property type="evidence" value="ECO:0000314"/>
    <property type="project" value="ComplexPortal"/>
</dbReference>
<dbReference type="GO" id="GO:0007597">
    <property type="term" value="P:blood coagulation, intrinsic pathway"/>
    <property type="evidence" value="ECO:0000266"/>
    <property type="project" value="ComplexPortal"/>
</dbReference>
<dbReference type="GO" id="GO:0007160">
    <property type="term" value="P:cell-matrix adhesion"/>
    <property type="evidence" value="ECO:0000315"/>
    <property type="project" value="MGI"/>
</dbReference>
<dbReference type="GO" id="GO:0035855">
    <property type="term" value="P:megakaryocyte development"/>
    <property type="evidence" value="ECO:0000315"/>
    <property type="project" value="ComplexPortal"/>
</dbReference>
<dbReference type="GO" id="GO:0010544">
    <property type="term" value="P:negative regulation of platelet activation"/>
    <property type="evidence" value="ECO:0000315"/>
    <property type="project" value="MGI"/>
</dbReference>
<dbReference type="GO" id="GO:0030168">
    <property type="term" value="P:platelet activation"/>
    <property type="evidence" value="ECO:0000315"/>
    <property type="project" value="MGI"/>
</dbReference>
<dbReference type="GO" id="GO:0010572">
    <property type="term" value="P:positive regulation of platelet activation"/>
    <property type="evidence" value="ECO:0000266"/>
    <property type="project" value="ComplexPortal"/>
</dbReference>
<dbReference type="GO" id="GO:0051209">
    <property type="term" value="P:release of sequestered calcium ion into cytosol"/>
    <property type="evidence" value="ECO:0000266"/>
    <property type="project" value="ComplexPortal"/>
</dbReference>
<dbReference type="FunFam" id="3.80.10.10:FF:000936">
    <property type="entry name" value="Platelet glycoprotein V"/>
    <property type="match status" value="1"/>
</dbReference>
<dbReference type="FunFam" id="3.80.10.10:FF:002360">
    <property type="entry name" value="Platelet glycoprotein V"/>
    <property type="match status" value="1"/>
</dbReference>
<dbReference type="Gene3D" id="3.80.10.10">
    <property type="entry name" value="Ribonuclease Inhibitor"/>
    <property type="match status" value="3"/>
</dbReference>
<dbReference type="InterPro" id="IPR000483">
    <property type="entry name" value="Cys-rich_flank_reg_C"/>
</dbReference>
<dbReference type="InterPro" id="IPR001611">
    <property type="entry name" value="Leu-rich_rpt"/>
</dbReference>
<dbReference type="InterPro" id="IPR003591">
    <property type="entry name" value="Leu-rich_rpt_typical-subtyp"/>
</dbReference>
<dbReference type="InterPro" id="IPR032675">
    <property type="entry name" value="LRR_dom_sf"/>
</dbReference>
<dbReference type="PANTHER" id="PTHR24366">
    <property type="entry name" value="IG(IMMUNOGLOBULIN) AND LRR(LEUCINE RICH REPEAT) DOMAINS"/>
    <property type="match status" value="1"/>
</dbReference>
<dbReference type="PANTHER" id="PTHR24366:SF96">
    <property type="entry name" value="LEUCINE RICH REPEAT CONTAINING 53"/>
    <property type="match status" value="1"/>
</dbReference>
<dbReference type="Pfam" id="PF13855">
    <property type="entry name" value="LRR_8"/>
    <property type="match status" value="4"/>
</dbReference>
<dbReference type="SMART" id="SM00369">
    <property type="entry name" value="LRR_TYP"/>
    <property type="match status" value="14"/>
</dbReference>
<dbReference type="SMART" id="SM00082">
    <property type="entry name" value="LRRCT"/>
    <property type="match status" value="1"/>
</dbReference>
<dbReference type="SUPFAM" id="SSF52058">
    <property type="entry name" value="L domain-like"/>
    <property type="match status" value="2"/>
</dbReference>
<dbReference type="PROSITE" id="PS51450">
    <property type="entry name" value="LRR"/>
    <property type="match status" value="12"/>
</dbReference>
<organism>
    <name type="scientific">Mus musculus</name>
    <name type="common">Mouse</name>
    <dbReference type="NCBI Taxonomy" id="10090"/>
    <lineage>
        <taxon>Eukaryota</taxon>
        <taxon>Metazoa</taxon>
        <taxon>Chordata</taxon>
        <taxon>Craniata</taxon>
        <taxon>Vertebrata</taxon>
        <taxon>Euteleostomi</taxon>
        <taxon>Mammalia</taxon>
        <taxon>Eutheria</taxon>
        <taxon>Euarchontoglires</taxon>
        <taxon>Glires</taxon>
        <taxon>Rodentia</taxon>
        <taxon>Myomorpha</taxon>
        <taxon>Muroidea</taxon>
        <taxon>Muridae</taxon>
        <taxon>Murinae</taxon>
        <taxon>Mus</taxon>
        <taxon>Mus</taxon>
    </lineage>
</organism>
<accession>O08742</accession>
<name>GPV_MOUSE</name>
<proteinExistence type="evidence at protein level"/>
<keyword id="KW-0094">Blood coagulation</keyword>
<keyword id="KW-0130">Cell adhesion</keyword>
<keyword id="KW-0325">Glycoprotein</keyword>
<keyword id="KW-0356">Hemostasis</keyword>
<keyword id="KW-0433">Leucine-rich repeat</keyword>
<keyword id="KW-0472">Membrane</keyword>
<keyword id="KW-1185">Reference proteome</keyword>
<keyword id="KW-0677">Repeat</keyword>
<keyword id="KW-0732">Signal</keyword>
<keyword id="KW-0812">Transmembrane</keyword>
<keyword id="KW-1133">Transmembrane helix</keyword>
<reference key="1">
    <citation type="journal article" date="1997" name="Blood">
        <title>Gene cloning of rat and mouse platelet glycoprotein V: identification of megakaryocyte-specific promoters and demonstration of functional thrombin cleavage.</title>
        <authorList>
            <person name="Ravanat C."/>
            <person name="Morales M."/>
            <person name="Azorsa D.O."/>
            <person name="Moog S."/>
            <person name="Schuhler S."/>
            <person name="Grunert P."/>
            <person name="Loew D."/>
            <person name="van Dorsselaer A."/>
            <person name="Cazenave J.-P."/>
            <person name="Lanza F."/>
        </authorList>
    </citation>
    <scope>NUCLEOTIDE SEQUENCE [GENOMIC DNA]</scope>
    <source>
        <strain>C57BL/6J</strain>
        <tissue>Liver</tissue>
    </source>
</reference>
<reference key="2">
    <citation type="journal article" date="2010" name="Cell">
        <title>A tissue-specific atlas of mouse protein phosphorylation and expression.</title>
        <authorList>
            <person name="Huttlin E.L."/>
            <person name="Jedrychowski M.P."/>
            <person name="Elias J.E."/>
            <person name="Goswami T."/>
            <person name="Rad R."/>
            <person name="Beausoleil S.A."/>
            <person name="Villen J."/>
            <person name="Haas W."/>
            <person name="Sowa M.E."/>
            <person name="Gygi S.P."/>
        </authorList>
    </citation>
    <scope>IDENTIFICATION BY MASS SPECTROMETRY [LARGE SCALE ANALYSIS]</scope>
    <source>
        <tissue>Spleen</tissue>
    </source>
</reference>
<feature type="signal peptide" evidence="2">
    <location>
        <begin position="1"/>
        <end position="16"/>
    </location>
</feature>
<feature type="chain" id="PRO_0000021362" description="Platelet glycoprotein V">
    <location>
        <begin position="17"/>
        <end position="567"/>
    </location>
</feature>
<feature type="topological domain" description="Extracellular" evidence="2">
    <location>
        <begin position="17"/>
        <end position="522"/>
    </location>
</feature>
<feature type="transmembrane region" description="Helical" evidence="2">
    <location>
        <begin position="523"/>
        <end position="543"/>
    </location>
</feature>
<feature type="topological domain" description="Cytoplasmic" evidence="2">
    <location>
        <begin position="544"/>
        <end position="567"/>
    </location>
</feature>
<feature type="domain" description="LRRNT">
    <location>
        <begin position="17"/>
        <end position="50"/>
    </location>
</feature>
<feature type="repeat" description="LRR 1">
    <location>
        <begin position="75"/>
        <end position="96"/>
    </location>
</feature>
<feature type="repeat" description="LRR 2">
    <location>
        <begin position="99"/>
        <end position="120"/>
    </location>
</feature>
<feature type="repeat" description="LRR 3">
    <location>
        <begin position="123"/>
        <end position="144"/>
    </location>
</feature>
<feature type="repeat" description="LRR 4">
    <location>
        <begin position="147"/>
        <end position="168"/>
    </location>
</feature>
<feature type="repeat" description="LRR 5">
    <location>
        <begin position="171"/>
        <end position="193"/>
    </location>
</feature>
<feature type="repeat" description="LRR 6">
    <location>
        <begin position="195"/>
        <end position="216"/>
    </location>
</feature>
<feature type="repeat" description="LRR 7">
    <location>
        <begin position="219"/>
        <end position="240"/>
    </location>
</feature>
<feature type="repeat" description="LRR 8">
    <location>
        <begin position="243"/>
        <end position="264"/>
    </location>
</feature>
<feature type="repeat" description="LRR 9">
    <location>
        <begin position="267"/>
        <end position="288"/>
    </location>
</feature>
<feature type="repeat" description="LRR 10">
    <location>
        <begin position="291"/>
        <end position="312"/>
    </location>
</feature>
<feature type="repeat" description="LRR 11">
    <location>
        <begin position="315"/>
        <end position="337"/>
    </location>
</feature>
<feature type="repeat" description="LRR 12">
    <location>
        <begin position="340"/>
        <end position="361"/>
    </location>
</feature>
<feature type="repeat" description="LRR 13">
    <location>
        <begin position="364"/>
        <end position="385"/>
    </location>
</feature>
<feature type="repeat" description="LRR 14">
    <location>
        <begin position="388"/>
        <end position="409"/>
    </location>
</feature>
<feature type="domain" description="LRRCT">
    <location>
        <begin position="421"/>
        <end position="474"/>
    </location>
</feature>
<feature type="glycosylation site" description="N-linked (GlcNAc...) asparagine" evidence="2">
    <location>
        <position position="51"/>
    </location>
</feature>
<feature type="glycosylation site" description="N-linked (GlcNAc...) asparagine" evidence="2">
    <location>
        <position position="67"/>
    </location>
</feature>
<feature type="glycosylation site" description="N-linked (GlcNAc...) asparagine" evidence="2">
    <location>
        <position position="181"/>
    </location>
</feature>
<feature type="glycosylation site" description="N-linked (GlcNAc...) asparagine" evidence="2">
    <location>
        <position position="243"/>
    </location>
</feature>
<feature type="glycosylation site" description="N-linked (GlcNAc...) asparagine" evidence="2">
    <location>
        <position position="298"/>
    </location>
</feature>
<feature type="glycosylation site" description="N-linked (GlcNAc...) asparagine" evidence="2">
    <location>
        <position position="312"/>
    </location>
</feature>
<feature type="glycosylation site" description="N-linked (GlcNAc...) asparagine" evidence="2">
    <location>
        <position position="385"/>
    </location>
</feature>
<comment type="function">
    <text evidence="1">The GPIb-V-IX complex functions as the vWF receptor and mediates vWF-dependent platelet adhesion to blood vessels. The adhesion of platelets to injured vascular surfaces in the arterial circulation is a critical initiating event in hemostasis (By similarity).</text>
</comment>
<comment type="subcellular location">
    <subcellularLocation>
        <location>Membrane</location>
        <topology>Single-pass type I membrane protein</topology>
    </subcellularLocation>
</comment>